<proteinExistence type="evidence at protein level"/>
<keyword id="KW-0002">3D-structure</keyword>
<keyword id="KW-0007">Acetylation</keyword>
<keyword id="KW-0963">Cytoplasm</keyword>
<keyword id="KW-1024">Diamond-Blackfan anemia</keyword>
<keyword id="KW-0903">Direct protein sequencing</keyword>
<keyword id="KW-0256">Endoplasmic reticulum</keyword>
<keyword id="KW-1267">Proteomics identification</keyword>
<keyword id="KW-1185">Reference proteome</keyword>
<keyword id="KW-0687">Ribonucleoprotein</keyword>
<keyword id="KW-0689">Ribosomal protein</keyword>
<accession>P61353</accession>
<accession>P08526</accession>
<accession>Q4G0A9</accession>
<gene>
    <name type="primary">RPL27</name>
</gene>
<comment type="function">
    <text evidence="3 4 5 6 8 11">Component of the large ribosomal subunit (PubMed:12962325, PubMed:23636399, PubMed:25901680, PubMed:25957688, PubMed:32669547). Required for proper rRNA processing and maturation of 28S and 5.8S rRNAs (PubMed:25424902).</text>
</comment>
<comment type="subunit">
    <text evidence="2 3 5 6 7 8 11">Component of the large ribosomal subunit (PubMed:12962325, PubMed:23636399, PubMed:25901680, PubMed:25957688, PubMed:32669547). Interacts with RRP1B (PubMed:20926688). Interacts with DHX33 (PubMed:26100019).</text>
</comment>
<comment type="interaction">
    <interactant intactId="EBI-352760">
        <id>P61353</id>
    </interactant>
    <interactant intactId="EBI-466029">
        <id>P42858</id>
        <label>HTT</label>
    </interactant>
    <organismsDiffer>false</organismsDiffer>
    <experiments>6</experiments>
</comment>
<comment type="interaction">
    <interactant intactId="EBI-352760">
        <id>P61353</id>
    </interactant>
    <interactant intactId="EBI-372051">
        <id>Q14684</id>
        <label>RRP1B</label>
    </interactant>
    <organismsDiffer>false</organismsDiffer>
    <experiments>3</experiments>
</comment>
<comment type="subcellular location">
    <subcellularLocation>
        <location evidence="6">Cytoplasm</location>
        <location evidence="6">Cytosol</location>
    </subcellularLocation>
    <subcellularLocation>
        <location evidence="12 13">Cytoplasm</location>
    </subcellularLocation>
    <subcellularLocation>
        <location evidence="1">Rough endoplasmic reticulum</location>
    </subcellularLocation>
    <text evidence="1 6">Detected on cytosolic polysomes (PubMed:25957688). Detected in ribosomes that are associated with the rough endoplasmic reticulum (By similarity).</text>
</comment>
<comment type="disease" evidence="4">
    <disease id="DI-04958">
        <name>Diamond-Blackfan anemia 16</name>
        <acronym>DBA16</acronym>
        <description>A form of Diamond-Blackfan anemia, a congenital non-regenerative hypoplastic anemia that usually presents early in infancy. Diamond-Blackfan anemia is characterized by a moderate to severe macrocytic anemia, erythroblastopenia, and an increased risk of malignancy. 30 to 40% of Diamond-Blackfan anemia patients present with short stature and congenital anomalies, the most frequent being craniofacial (Pierre-Robin syndrome and cleft palate), thumb and urogenital anomalies.</description>
        <dbReference type="MIM" id="617408"/>
    </disease>
    <text>The disease is caused by variants affecting the gene represented in this entry.</text>
</comment>
<comment type="similarity">
    <text evidence="10">Belongs to the eukaryotic ribosomal protein eL27 family.</text>
</comment>
<evidence type="ECO:0000250" key="1">
    <source>
        <dbReference type="UniProtKB" id="A1XQU5"/>
    </source>
</evidence>
<evidence type="ECO:0000269" key="2">
    <source>
    </source>
</evidence>
<evidence type="ECO:0000269" key="3">
    <source>
    </source>
</evidence>
<evidence type="ECO:0000269" key="4">
    <source>
    </source>
</evidence>
<evidence type="ECO:0000269" key="5">
    <source>
    </source>
</evidence>
<evidence type="ECO:0000269" key="6">
    <source>
    </source>
</evidence>
<evidence type="ECO:0000269" key="7">
    <source>
    </source>
</evidence>
<evidence type="ECO:0000269" key="8">
    <source>
    </source>
</evidence>
<evidence type="ECO:0000303" key="9">
    <source>
    </source>
</evidence>
<evidence type="ECO:0000305" key="10"/>
<evidence type="ECO:0000305" key="11">
    <source>
    </source>
</evidence>
<evidence type="ECO:0000305" key="12">
    <source>
    </source>
</evidence>
<evidence type="ECO:0000305" key="13">
    <source>
    </source>
</evidence>
<evidence type="ECO:0007744" key="14">
    <source>
        <dbReference type="PDB" id="4UG0"/>
    </source>
</evidence>
<evidence type="ECO:0007744" key="15">
    <source>
        <dbReference type="PDB" id="5AJ0"/>
    </source>
</evidence>
<evidence type="ECO:0007744" key="16">
    <source>
        <dbReference type="PDB" id="6LQM"/>
    </source>
</evidence>
<evidence type="ECO:0007744" key="17">
    <source>
        <dbReference type="PDB" id="6LSR"/>
    </source>
</evidence>
<evidence type="ECO:0007744" key="18">
    <source>
        <dbReference type="PDB" id="6LSS"/>
    </source>
</evidence>
<evidence type="ECO:0007744" key="19">
    <source>
        <dbReference type="PDB" id="6LU8"/>
    </source>
</evidence>
<evidence type="ECO:0007744" key="20">
    <source>
    </source>
</evidence>
<name>RL27_HUMAN</name>
<organism>
    <name type="scientific">Homo sapiens</name>
    <name type="common">Human</name>
    <dbReference type="NCBI Taxonomy" id="9606"/>
    <lineage>
        <taxon>Eukaryota</taxon>
        <taxon>Metazoa</taxon>
        <taxon>Chordata</taxon>
        <taxon>Craniata</taxon>
        <taxon>Vertebrata</taxon>
        <taxon>Euteleostomi</taxon>
        <taxon>Mammalia</taxon>
        <taxon>Eutheria</taxon>
        <taxon>Euarchontoglires</taxon>
        <taxon>Primates</taxon>
        <taxon>Haplorrhini</taxon>
        <taxon>Catarrhini</taxon>
        <taxon>Hominidae</taxon>
        <taxon>Homo</taxon>
    </lineage>
</organism>
<reference key="1">
    <citation type="journal article" date="1994" name="Biochim. Biophys. Acta">
        <title>Cloning and nucleotide sequence of a full length cDNA encoding ribosomal protein L27 from human fetal kidney.</title>
        <authorList>
            <person name="Gallagher R.A."/>
            <person name="McClean P.M."/>
            <person name="Malik A.N."/>
        </authorList>
    </citation>
    <scope>NUCLEOTIDE SEQUENCE [MRNA]</scope>
    <source>
        <tissue>Kidney</tissue>
    </source>
</reference>
<reference key="2">
    <citation type="journal article" date="2002" name="Genome Res.">
        <title>The human ribosomal protein genes: sequencing and comparative analysis of 73 genes.</title>
        <authorList>
            <person name="Yoshihama M."/>
            <person name="Uechi T."/>
            <person name="Asakawa S."/>
            <person name="Kawasaki K."/>
            <person name="Kato S."/>
            <person name="Higa S."/>
            <person name="Maeda N."/>
            <person name="Minoshima S."/>
            <person name="Tanaka T."/>
            <person name="Shimizu N."/>
            <person name="Kenmochi N."/>
        </authorList>
    </citation>
    <scope>NUCLEOTIDE SEQUENCE [GENOMIC DNA]</scope>
</reference>
<reference key="3">
    <citation type="submission" date="1993-08" db="EMBL/GenBank/DDBJ databases">
        <authorList>
            <person name="Bhat K.S."/>
        </authorList>
    </citation>
    <scope>NUCLEOTIDE SEQUENCE [MRNA]</scope>
</reference>
<reference key="4">
    <citation type="journal article" date="2004" name="Genome Res.">
        <title>The status, quality, and expansion of the NIH full-length cDNA project: the Mammalian Gene Collection (MGC).</title>
        <authorList>
            <consortium name="The MGC Project Team"/>
        </authorList>
    </citation>
    <scope>NUCLEOTIDE SEQUENCE [LARGE SCALE MRNA]</scope>
    <source>
        <tissue>Blood</tissue>
        <tissue>Brain</tissue>
        <tissue>Eye</tissue>
        <tissue>Skin</tissue>
    </source>
</reference>
<reference key="5">
    <citation type="journal article" date="2003" name="J. Protein Chem.">
        <title>Characterization and analysis of posttranslational modifications of the human large cytoplasmic ribosomal subunit proteins by mass spectrometry and Edman sequencing.</title>
        <authorList>
            <person name="Odintsova T.I."/>
            <person name="Muller E.C."/>
            <person name="Ivanov A.V."/>
            <person name="Egorov T.A."/>
            <person name="Bienert R."/>
            <person name="Vladimirov S.N."/>
            <person name="Kostka S."/>
            <person name="Otto A."/>
            <person name="Wittmann-Liebold B."/>
            <person name="Karpova G.G."/>
        </authorList>
    </citation>
    <scope>PROTEIN SEQUENCE OF 2-11</scope>
    <scope>IDENTIFICATION BY MASS SPECTROMETRY</scope>
    <scope>FUNCTION</scope>
    <scope>SUBUNIT</scope>
</reference>
<reference key="6">
    <citation type="journal article" date="2003" name="Nature">
        <title>Proteomic characterization of the human centrosome by protein correlation profiling.</title>
        <authorList>
            <person name="Andersen J.S."/>
            <person name="Wilkinson C.J."/>
            <person name="Mayor T."/>
            <person name="Mortensen P."/>
            <person name="Nigg E.A."/>
            <person name="Mann M."/>
        </authorList>
    </citation>
    <scope>IDENTIFICATION BY MASS SPECTROMETRY</scope>
    <source>
        <tissue>Lymphoblast</tissue>
    </source>
</reference>
<reference key="7">
    <citation type="journal article" date="2009" name="Science">
        <title>Lysine acetylation targets protein complexes and co-regulates major cellular functions.</title>
        <authorList>
            <person name="Choudhary C."/>
            <person name="Kumar C."/>
            <person name="Gnad F."/>
            <person name="Nielsen M.L."/>
            <person name="Rehman M."/>
            <person name="Walther T.C."/>
            <person name="Olsen J.V."/>
            <person name="Mann M."/>
        </authorList>
    </citation>
    <scope>ACETYLATION [LARGE SCALE ANALYSIS] AT LYS-27 AND LYS-93</scope>
    <scope>IDENTIFICATION BY MASS SPECTROMETRY [LARGE SCALE ANALYSIS]</scope>
</reference>
<reference key="8">
    <citation type="journal article" date="2010" name="Mol. Biol. Cell">
        <title>RRP1B targets PP1 to mammalian cell nucleoli and is associated with pre-60S ribosomal subunits.</title>
        <authorList>
            <person name="Chamousset D."/>
            <person name="De Wever V."/>
            <person name="Moorhead G.B."/>
            <person name="Chen Y."/>
            <person name="Boisvert F.M."/>
            <person name="Lamond A.I."/>
            <person name="Trinkle-Mulcahy L."/>
        </authorList>
    </citation>
    <scope>INTERACTION WITH RRPL1</scope>
</reference>
<reference key="9">
    <citation type="journal article" date="2011" name="BMC Syst. Biol.">
        <title>Initial characterization of the human central proteome.</title>
        <authorList>
            <person name="Burkard T.R."/>
            <person name="Planyavsky M."/>
            <person name="Kaupe I."/>
            <person name="Breitwieser F.P."/>
            <person name="Buerckstuemmer T."/>
            <person name="Bennett K.L."/>
            <person name="Superti-Furga G."/>
            <person name="Colinge J."/>
        </authorList>
    </citation>
    <scope>IDENTIFICATION BY MASS SPECTROMETRY [LARGE SCALE ANALYSIS]</scope>
</reference>
<reference key="10">
    <citation type="journal article" date="2012" name="Proc. Natl. Acad. Sci. U.S.A.">
        <title>N-terminal acetylome analyses and functional insights of the N-terminal acetyltransferase NatB.</title>
        <authorList>
            <person name="Van Damme P."/>
            <person name="Lasa M."/>
            <person name="Polevoda B."/>
            <person name="Gazquez C."/>
            <person name="Elosegui-Artola A."/>
            <person name="Kim D.S."/>
            <person name="De Juan-Pardo E."/>
            <person name="Demeyer K."/>
            <person name="Hole K."/>
            <person name="Larrea E."/>
            <person name="Timmerman E."/>
            <person name="Prieto J."/>
            <person name="Arnesen T."/>
            <person name="Sherman F."/>
            <person name="Gevaert K."/>
            <person name="Aldabe R."/>
        </authorList>
    </citation>
    <scope>IDENTIFICATION BY MASS SPECTROMETRY [LARGE SCALE ANALYSIS]</scope>
</reference>
<reference key="11">
    <citation type="journal article" date="2014" name="Curr. Opin. Struct. Biol.">
        <title>A new system for naming ribosomal proteins.</title>
        <authorList>
            <person name="Ban N."/>
            <person name="Beckmann R."/>
            <person name="Cate J.H.D."/>
            <person name="Dinman J.D."/>
            <person name="Dragon F."/>
            <person name="Ellis S.R."/>
            <person name="Lafontaine D.L.J."/>
            <person name="Lindahl L."/>
            <person name="Liljas A."/>
            <person name="Lipton J.M."/>
            <person name="McAlear M.A."/>
            <person name="Moore P.B."/>
            <person name="Noller H.F."/>
            <person name="Ortega J."/>
            <person name="Panse V.G."/>
            <person name="Ramakrishnan V."/>
            <person name="Spahn C.M.T."/>
            <person name="Steitz T.A."/>
            <person name="Tchorzewski M."/>
            <person name="Tollervey D."/>
            <person name="Warren A.J."/>
            <person name="Williamson J.R."/>
            <person name="Wilson D."/>
            <person name="Yonath A."/>
            <person name="Yusupov M."/>
        </authorList>
    </citation>
    <scope>NOMENCLATURE</scope>
</reference>
<reference key="12">
    <citation type="journal article" date="2014" name="J. Proteomics">
        <title>An enzyme assisted RP-RPLC approach for in-depth analysis of human liver phosphoproteome.</title>
        <authorList>
            <person name="Bian Y."/>
            <person name="Song C."/>
            <person name="Cheng K."/>
            <person name="Dong M."/>
            <person name="Wang F."/>
            <person name="Huang J."/>
            <person name="Sun D."/>
            <person name="Wang L."/>
            <person name="Ye M."/>
            <person name="Zou H."/>
        </authorList>
    </citation>
    <scope>IDENTIFICATION BY MASS SPECTROMETRY [LARGE SCALE ANALYSIS]</scope>
    <source>
        <tissue>Liver</tissue>
    </source>
</reference>
<reference key="13">
    <citation type="journal article" date="2015" name="Br. J. Haematol.">
        <title>Loss of function mutations in RPL27 and RPS27 identified by whole-exome sequencing in Diamond-Blackfan anaemia.</title>
        <authorList>
            <person name="Wang R."/>
            <person name="Yoshida K."/>
            <person name="Toki T."/>
            <person name="Sawada T."/>
            <person name="Uechi T."/>
            <person name="Okuno Y."/>
            <person name="Sato-Otsubo A."/>
            <person name="Kudo K."/>
            <person name="Kamimaki I."/>
            <person name="Kanezaki R."/>
            <person name="Shiraishi Y."/>
            <person name="Chiba K."/>
            <person name="Tanaka H."/>
            <person name="Terui K."/>
            <person name="Sato T."/>
            <person name="Iribe Y."/>
            <person name="Ohga S."/>
            <person name="Kuramitsu M."/>
            <person name="Hamaguchi I."/>
            <person name="Ohara A."/>
            <person name="Hara J."/>
            <person name="Goi K."/>
            <person name="Matsubara K."/>
            <person name="Koike K."/>
            <person name="Ishiguro A."/>
            <person name="Okamoto Y."/>
            <person name="Watanabe K."/>
            <person name="Kanno H."/>
            <person name="Kojima S."/>
            <person name="Miyano S."/>
            <person name="Kenmochi N."/>
            <person name="Ogawa S."/>
            <person name="Ito E."/>
        </authorList>
    </citation>
    <scope>FUNCTION</scope>
    <scope>INVOLVEMENT IN DBA16</scope>
</reference>
<reference key="14">
    <citation type="journal article" date="2015" name="Mol. Cell. Biol.">
        <title>The DHX33 RNA Helicase Promotes mRNA Translation Initiation.</title>
        <authorList>
            <person name="Zhang Y."/>
            <person name="You J."/>
            <person name="Wang X."/>
            <person name="Weber J."/>
        </authorList>
    </citation>
    <scope>INTERACTION WITH DHX33</scope>
</reference>
<reference key="15">
    <citation type="journal article" date="2015" name="Proteomics">
        <title>N-terminome analysis of the human mitochondrial proteome.</title>
        <authorList>
            <person name="Vaca Jacome A.S."/>
            <person name="Rabilloud T."/>
            <person name="Schaeffer-Reiss C."/>
            <person name="Rompais M."/>
            <person name="Ayoub D."/>
            <person name="Lane L."/>
            <person name="Bairoch A."/>
            <person name="Van Dorsselaer A."/>
            <person name="Carapito C."/>
        </authorList>
    </citation>
    <scope>IDENTIFICATION BY MASS SPECTROMETRY [LARGE SCALE ANALYSIS]</scope>
</reference>
<reference key="16">
    <citation type="journal article" date="2013" name="Nature">
        <title>Structures of the human and Drosophila 80S ribosome.</title>
        <authorList>
            <person name="Anger A.M."/>
            <person name="Armache J.P."/>
            <person name="Berninghausen O."/>
            <person name="Habeck M."/>
            <person name="Subklewe M."/>
            <person name="Wilson D.N."/>
            <person name="Beckmann R."/>
        </authorList>
    </citation>
    <scope>STRUCTURE BY ELECTRON MICROSCOPY (5.0 ANGSTROMS)</scope>
    <scope>FUNCTION</scope>
    <scope>SUBUNIT</scope>
    <scope>SUBCELLULAR LOCATION</scope>
</reference>
<reference evidence="15" key="17">
    <citation type="journal article" date="2015" name="Cell">
        <title>Structural snapshots of actively translating human ribosomes.</title>
        <authorList>
            <person name="Behrmann E."/>
            <person name="Loerke J."/>
            <person name="Budkevich T.V."/>
            <person name="Yamamoto K."/>
            <person name="Schmidt A."/>
            <person name="Penczek P.A."/>
            <person name="Vos M.R."/>
            <person name="Burger J."/>
            <person name="Mielke T."/>
            <person name="Scheerer P."/>
            <person name="Spahn C.M."/>
        </authorList>
    </citation>
    <scope>STRUCTURE BY ELECTRON MICROSCOPY (3.50 ANGSTROMS)</scope>
    <scope>FUNCTION</scope>
    <scope>SUBUNIT</scope>
    <scope>SUBCELLULAR LOCATION</scope>
</reference>
<reference evidence="14" key="18">
    <citation type="journal article" date="2015" name="Nature">
        <title>Structure of the human 80S ribosome.</title>
        <authorList>
            <person name="Khatter H."/>
            <person name="Myasnikov A.G."/>
            <person name="Natchiar S.K."/>
            <person name="Klaholz B.P."/>
        </authorList>
    </citation>
    <scope>STRUCTURE BY ELECTRON MICROSCOPY (3.60 ANGSTROMS)</scope>
    <scope>FUNCTION</scope>
    <scope>SUBUNIT</scope>
    <scope>SUBCELLULAR LOCATION</scope>
</reference>
<reference evidence="16 17 18 19" key="19">
    <citation type="journal article" date="2020" name="Nat. Commun.">
        <title>Structural snapshots of human pre-60S ribosomal particles before and after nuclear export.</title>
        <authorList>
            <person name="Liang X."/>
            <person name="Zuo M.Q."/>
            <person name="Zhang Y."/>
            <person name="Li N."/>
            <person name="Ma C."/>
            <person name="Dong M.Q."/>
            <person name="Gao N."/>
        </authorList>
    </citation>
    <scope>STRUCTURE BY ELECTRON MICROSCOPY (3.09 ANGSTROMS)</scope>
    <scope>FUNCTION</scope>
    <scope>SUBUNIT</scope>
</reference>
<dbReference type="EMBL" id="L19527">
    <property type="protein sequence ID" value="AAA19815.1"/>
    <property type="molecule type" value="mRNA"/>
</dbReference>
<dbReference type="EMBL" id="AB061851">
    <property type="protein sequence ID" value="BAB79492.1"/>
    <property type="molecule type" value="Genomic_DNA"/>
</dbReference>
<dbReference type="EMBL" id="L05094">
    <property type="protein sequence ID" value="AAC15857.1"/>
    <property type="molecule type" value="mRNA"/>
</dbReference>
<dbReference type="EMBL" id="BC001700">
    <property type="protein sequence ID" value="AAH01700.1"/>
    <property type="molecule type" value="mRNA"/>
</dbReference>
<dbReference type="EMBL" id="BC002588">
    <property type="protein sequence ID" value="AAH02588.1"/>
    <property type="molecule type" value="mRNA"/>
</dbReference>
<dbReference type="EMBL" id="BC007273">
    <property type="protein sequence ID" value="AAH07273.1"/>
    <property type="molecule type" value="mRNA"/>
</dbReference>
<dbReference type="EMBL" id="BC010026">
    <property type="protein sequence ID" value="AAH10026.1"/>
    <property type="molecule type" value="mRNA"/>
</dbReference>
<dbReference type="EMBL" id="BC098560">
    <property type="protein sequence ID" value="AAH98560.1"/>
    <property type="molecule type" value="mRNA"/>
</dbReference>
<dbReference type="CCDS" id="CCDS11449.1"/>
<dbReference type="PIR" id="S43505">
    <property type="entry name" value="S43505"/>
</dbReference>
<dbReference type="RefSeq" id="NP_000979.1">
    <property type="nucleotide sequence ID" value="NM_000988.5"/>
</dbReference>
<dbReference type="RefSeq" id="NP_001336850.1">
    <property type="nucleotide sequence ID" value="NM_001349921.2"/>
</dbReference>
<dbReference type="RefSeq" id="NP_001336851.1">
    <property type="nucleotide sequence ID" value="NM_001349922.2"/>
</dbReference>
<dbReference type="PDB" id="4UG0">
    <property type="method" value="EM"/>
    <property type="chains" value="LZ=1-136"/>
</dbReference>
<dbReference type="PDB" id="4V6X">
    <property type="method" value="EM"/>
    <property type="resolution" value="5.00 A"/>
    <property type="chains" value="CZ=1-136"/>
</dbReference>
<dbReference type="PDB" id="5AJ0">
    <property type="method" value="EM"/>
    <property type="resolution" value="3.50 A"/>
    <property type="chains" value="AZ=1-136"/>
</dbReference>
<dbReference type="PDB" id="5LKS">
    <property type="method" value="EM"/>
    <property type="resolution" value="3.60 A"/>
    <property type="chains" value="LZ=1-136"/>
</dbReference>
<dbReference type="PDB" id="5T2C">
    <property type="method" value="EM"/>
    <property type="resolution" value="3.60 A"/>
    <property type="chains" value="T=1-136"/>
</dbReference>
<dbReference type="PDB" id="6IP5">
    <property type="method" value="EM"/>
    <property type="resolution" value="3.90 A"/>
    <property type="chains" value="2T=1-136"/>
</dbReference>
<dbReference type="PDB" id="6IP6">
    <property type="method" value="EM"/>
    <property type="resolution" value="4.50 A"/>
    <property type="chains" value="2T=1-136"/>
</dbReference>
<dbReference type="PDB" id="6IP8">
    <property type="method" value="EM"/>
    <property type="resolution" value="3.90 A"/>
    <property type="chains" value="2T=1-136"/>
</dbReference>
<dbReference type="PDB" id="6LQM">
    <property type="method" value="EM"/>
    <property type="resolution" value="3.09 A"/>
    <property type="chains" value="i=1-136"/>
</dbReference>
<dbReference type="PDB" id="6LSR">
    <property type="method" value="EM"/>
    <property type="resolution" value="3.13 A"/>
    <property type="chains" value="i=1-136"/>
</dbReference>
<dbReference type="PDB" id="6LSS">
    <property type="method" value="EM"/>
    <property type="resolution" value="3.23 A"/>
    <property type="chains" value="i=1-136"/>
</dbReference>
<dbReference type="PDB" id="6LU8">
    <property type="method" value="EM"/>
    <property type="resolution" value="3.13 A"/>
    <property type="chains" value="i=1-136"/>
</dbReference>
<dbReference type="PDB" id="6OLE">
    <property type="method" value="EM"/>
    <property type="resolution" value="3.10 A"/>
    <property type="chains" value="a=3-136"/>
</dbReference>
<dbReference type="PDB" id="6OLF">
    <property type="method" value="EM"/>
    <property type="resolution" value="3.90 A"/>
    <property type="chains" value="a=3-136"/>
</dbReference>
<dbReference type="PDB" id="6OLG">
    <property type="method" value="EM"/>
    <property type="resolution" value="3.40 A"/>
    <property type="chains" value="AZ=3-136"/>
</dbReference>
<dbReference type="PDB" id="6OLI">
    <property type="method" value="EM"/>
    <property type="resolution" value="3.50 A"/>
    <property type="chains" value="a=3-136"/>
</dbReference>
<dbReference type="PDB" id="6OLZ">
    <property type="method" value="EM"/>
    <property type="resolution" value="3.90 A"/>
    <property type="chains" value="AZ=3-136"/>
</dbReference>
<dbReference type="PDB" id="6OM0">
    <property type="method" value="EM"/>
    <property type="resolution" value="3.10 A"/>
    <property type="chains" value="a=3-136"/>
</dbReference>
<dbReference type="PDB" id="6OM7">
    <property type="method" value="EM"/>
    <property type="resolution" value="3.70 A"/>
    <property type="chains" value="a=3-136"/>
</dbReference>
<dbReference type="PDB" id="6QZP">
    <property type="method" value="EM"/>
    <property type="resolution" value="2.90 A"/>
    <property type="chains" value="LZ=2-136"/>
</dbReference>
<dbReference type="PDB" id="6W6L">
    <property type="method" value="EM"/>
    <property type="resolution" value="3.84 A"/>
    <property type="chains" value="a=1-136"/>
</dbReference>
<dbReference type="PDB" id="6XA1">
    <property type="method" value="EM"/>
    <property type="resolution" value="2.80 A"/>
    <property type="chains" value="LZ=2-136"/>
</dbReference>
<dbReference type="PDB" id="6Y0G">
    <property type="method" value="EM"/>
    <property type="resolution" value="3.20 A"/>
    <property type="chains" value="LZ=1-136"/>
</dbReference>
<dbReference type="PDB" id="6Y2L">
    <property type="method" value="EM"/>
    <property type="resolution" value="3.00 A"/>
    <property type="chains" value="LZ=1-136"/>
</dbReference>
<dbReference type="PDB" id="6Y57">
    <property type="method" value="EM"/>
    <property type="resolution" value="3.50 A"/>
    <property type="chains" value="LZ=1-136"/>
</dbReference>
<dbReference type="PDB" id="6Y6X">
    <property type="method" value="EM"/>
    <property type="resolution" value="2.80 A"/>
    <property type="chains" value="LZ=2-136"/>
</dbReference>
<dbReference type="PDB" id="6Z6L">
    <property type="method" value="EM"/>
    <property type="resolution" value="3.00 A"/>
    <property type="chains" value="LZ=1-136"/>
</dbReference>
<dbReference type="PDB" id="6Z6M">
    <property type="method" value="EM"/>
    <property type="resolution" value="3.10 A"/>
    <property type="chains" value="LZ=1-136"/>
</dbReference>
<dbReference type="PDB" id="6Z6N">
    <property type="method" value="EM"/>
    <property type="resolution" value="2.90 A"/>
    <property type="chains" value="LZ=1-136"/>
</dbReference>
<dbReference type="PDB" id="6ZM7">
    <property type="method" value="EM"/>
    <property type="resolution" value="2.70 A"/>
    <property type="chains" value="LZ=1-136"/>
</dbReference>
<dbReference type="PDB" id="6ZME">
    <property type="method" value="EM"/>
    <property type="resolution" value="3.00 A"/>
    <property type="chains" value="LZ=1-136"/>
</dbReference>
<dbReference type="PDB" id="6ZMI">
    <property type="method" value="EM"/>
    <property type="resolution" value="2.60 A"/>
    <property type="chains" value="LZ=1-136"/>
</dbReference>
<dbReference type="PDB" id="6ZMO">
    <property type="method" value="EM"/>
    <property type="resolution" value="3.10 A"/>
    <property type="chains" value="LZ=1-136"/>
</dbReference>
<dbReference type="PDB" id="7BHP">
    <property type="method" value="EM"/>
    <property type="resolution" value="3.30 A"/>
    <property type="chains" value="LZ=1-136"/>
</dbReference>
<dbReference type="PDB" id="7F5S">
    <property type="method" value="EM"/>
    <property type="resolution" value="2.72 A"/>
    <property type="chains" value="LZ=1-136"/>
</dbReference>
<dbReference type="PDB" id="7OW7">
    <property type="method" value="EM"/>
    <property type="resolution" value="2.20 A"/>
    <property type="chains" value="T=1-136"/>
</dbReference>
<dbReference type="PDB" id="8A3D">
    <property type="method" value="EM"/>
    <property type="resolution" value="1.67 A"/>
    <property type="chains" value="T=1-136"/>
</dbReference>
<dbReference type="PDB" id="8FKY">
    <property type="method" value="EM"/>
    <property type="resolution" value="2.67 A"/>
    <property type="chains" value="LJ=1-136"/>
</dbReference>
<dbReference type="PDB" id="8FKZ">
    <property type="method" value="EM"/>
    <property type="resolution" value="3.04 A"/>
    <property type="chains" value="LJ=1-136"/>
</dbReference>
<dbReference type="PDB" id="8FL2">
    <property type="method" value="EM"/>
    <property type="resolution" value="2.67 A"/>
    <property type="chains" value="LJ=1-136"/>
</dbReference>
<dbReference type="PDB" id="8FL3">
    <property type="method" value="EM"/>
    <property type="resolution" value="2.53 A"/>
    <property type="chains" value="LJ=1-136"/>
</dbReference>
<dbReference type="PDB" id="8FL4">
    <property type="method" value="EM"/>
    <property type="resolution" value="2.89 A"/>
    <property type="chains" value="LJ=1-136"/>
</dbReference>
<dbReference type="PDB" id="8FL6">
    <property type="method" value="EM"/>
    <property type="resolution" value="2.62 A"/>
    <property type="chains" value="LJ=1-136"/>
</dbReference>
<dbReference type="PDB" id="8FL7">
    <property type="method" value="EM"/>
    <property type="resolution" value="2.55 A"/>
    <property type="chains" value="LJ=1-136"/>
</dbReference>
<dbReference type="PDB" id="8FL9">
    <property type="method" value="EM"/>
    <property type="resolution" value="2.75 A"/>
    <property type="chains" value="LJ=1-136"/>
</dbReference>
<dbReference type="PDB" id="8FLA">
    <property type="method" value="EM"/>
    <property type="resolution" value="2.63 A"/>
    <property type="chains" value="LJ=1-136"/>
</dbReference>
<dbReference type="PDB" id="8FLB">
    <property type="method" value="EM"/>
    <property type="resolution" value="2.55 A"/>
    <property type="chains" value="LJ=1-136"/>
</dbReference>
<dbReference type="PDB" id="8FLC">
    <property type="method" value="EM"/>
    <property type="resolution" value="2.76 A"/>
    <property type="chains" value="LJ=1-136"/>
</dbReference>
<dbReference type="PDB" id="8FLD">
    <property type="method" value="EM"/>
    <property type="resolution" value="2.58 A"/>
    <property type="chains" value="LJ=1-136"/>
</dbReference>
<dbReference type="PDB" id="8FLE">
    <property type="method" value="EM"/>
    <property type="resolution" value="2.48 A"/>
    <property type="chains" value="LJ=1-136"/>
</dbReference>
<dbReference type="PDB" id="8FLF">
    <property type="method" value="EM"/>
    <property type="resolution" value="2.65 A"/>
    <property type="chains" value="LJ=1-136"/>
</dbReference>
<dbReference type="PDB" id="8G5Y">
    <property type="method" value="EM"/>
    <property type="resolution" value="2.29 A"/>
    <property type="chains" value="LZ=1-136"/>
</dbReference>
<dbReference type="PDB" id="8G5Z">
    <property type="method" value="EM"/>
    <property type="resolution" value="2.64 A"/>
    <property type="chains" value="LZ=2-136"/>
</dbReference>
<dbReference type="PDB" id="8G60">
    <property type="method" value="EM"/>
    <property type="resolution" value="2.54 A"/>
    <property type="chains" value="LZ=1-136"/>
</dbReference>
<dbReference type="PDB" id="8G61">
    <property type="method" value="EM"/>
    <property type="resolution" value="2.94 A"/>
    <property type="chains" value="LZ=1-136"/>
</dbReference>
<dbReference type="PDB" id="8G6J">
    <property type="method" value="EM"/>
    <property type="resolution" value="2.80 A"/>
    <property type="chains" value="LZ=1-136"/>
</dbReference>
<dbReference type="PDB" id="8GLP">
    <property type="method" value="EM"/>
    <property type="resolution" value="1.67 A"/>
    <property type="chains" value="LZ=1-136"/>
</dbReference>
<dbReference type="PDB" id="8IDT">
    <property type="method" value="EM"/>
    <property type="resolution" value="2.80 A"/>
    <property type="chains" value="i=1-136"/>
</dbReference>
<dbReference type="PDB" id="8IDY">
    <property type="method" value="EM"/>
    <property type="resolution" value="3.00 A"/>
    <property type="chains" value="i=1-136"/>
</dbReference>
<dbReference type="PDB" id="8IE3">
    <property type="method" value="EM"/>
    <property type="resolution" value="3.30 A"/>
    <property type="chains" value="i=1-136"/>
</dbReference>
<dbReference type="PDB" id="8IFD">
    <property type="method" value="EM"/>
    <property type="resolution" value="2.59 A"/>
    <property type="chains" value="2T=1-136"/>
</dbReference>
<dbReference type="PDB" id="8IFE">
    <property type="method" value="EM"/>
    <property type="resolution" value="2.57 A"/>
    <property type="chains" value="2T=1-136"/>
</dbReference>
<dbReference type="PDB" id="8INE">
    <property type="method" value="EM"/>
    <property type="resolution" value="3.20 A"/>
    <property type="chains" value="i=1-136"/>
</dbReference>
<dbReference type="PDB" id="8INF">
    <property type="method" value="EM"/>
    <property type="resolution" value="3.00 A"/>
    <property type="chains" value="i=1-136"/>
</dbReference>
<dbReference type="PDB" id="8INK">
    <property type="method" value="EM"/>
    <property type="resolution" value="3.20 A"/>
    <property type="chains" value="i=1-136"/>
</dbReference>
<dbReference type="PDB" id="8IPD">
    <property type="method" value="EM"/>
    <property type="resolution" value="3.20 A"/>
    <property type="chains" value="i=1-136"/>
</dbReference>
<dbReference type="PDB" id="8IPX">
    <property type="method" value="EM"/>
    <property type="resolution" value="4.30 A"/>
    <property type="chains" value="i=1-136"/>
</dbReference>
<dbReference type="PDB" id="8IPY">
    <property type="method" value="EM"/>
    <property type="resolution" value="3.20 A"/>
    <property type="chains" value="i=1-136"/>
</dbReference>
<dbReference type="PDB" id="8IR1">
    <property type="method" value="EM"/>
    <property type="resolution" value="3.30 A"/>
    <property type="chains" value="i=1-136"/>
</dbReference>
<dbReference type="PDB" id="8IR3">
    <property type="method" value="EM"/>
    <property type="resolution" value="3.50 A"/>
    <property type="chains" value="i=1-136"/>
</dbReference>
<dbReference type="PDB" id="8JDJ">
    <property type="method" value="EM"/>
    <property type="resolution" value="2.50 A"/>
    <property type="chains" value="e=1-136"/>
</dbReference>
<dbReference type="PDB" id="8JDK">
    <property type="method" value="EM"/>
    <property type="resolution" value="2.26 A"/>
    <property type="chains" value="e=1-136"/>
</dbReference>
<dbReference type="PDB" id="8JDL">
    <property type="method" value="EM"/>
    <property type="resolution" value="2.42 A"/>
    <property type="chains" value="e=1-136"/>
</dbReference>
<dbReference type="PDB" id="8JDM">
    <property type="method" value="EM"/>
    <property type="resolution" value="2.67 A"/>
    <property type="chains" value="e=1-136"/>
</dbReference>
<dbReference type="PDB" id="8K2C">
    <property type="method" value="EM"/>
    <property type="resolution" value="2.40 A"/>
    <property type="chains" value="LZ=1-136"/>
</dbReference>
<dbReference type="PDB" id="8OHD">
    <property type="method" value="EM"/>
    <property type="resolution" value="3.10 A"/>
    <property type="chains" value="LZ=1-136"/>
</dbReference>
<dbReference type="PDB" id="8OJ0">
    <property type="method" value="EM"/>
    <property type="resolution" value="3.30 A"/>
    <property type="chains" value="LZ=1-136"/>
</dbReference>
<dbReference type="PDB" id="8OJ5">
    <property type="method" value="EM"/>
    <property type="resolution" value="2.90 A"/>
    <property type="chains" value="LZ=1-136"/>
</dbReference>
<dbReference type="PDB" id="8OJ8">
    <property type="method" value="EM"/>
    <property type="resolution" value="3.30 A"/>
    <property type="chains" value="LZ=1-136"/>
</dbReference>
<dbReference type="PDB" id="8QFD">
    <property type="method" value="EM"/>
    <property type="resolution" value="2.20 A"/>
    <property type="chains" value="Z=1-136"/>
</dbReference>
<dbReference type="PDB" id="8QOI">
    <property type="method" value="EM"/>
    <property type="resolution" value="1.90 A"/>
    <property type="chains" value="LZ=1-136"/>
</dbReference>
<dbReference type="PDB" id="8QYX">
    <property type="method" value="EM"/>
    <property type="resolution" value="1.78 A"/>
    <property type="chains" value="T1=1-136"/>
</dbReference>
<dbReference type="PDB" id="8RL2">
    <property type="method" value="EM"/>
    <property type="resolution" value="2.84 A"/>
    <property type="chains" value="LZ=1-136"/>
</dbReference>
<dbReference type="PDB" id="8UKB">
    <property type="method" value="EM"/>
    <property type="resolution" value="3.05 A"/>
    <property type="chains" value="LZ=2-136"/>
</dbReference>
<dbReference type="PDB" id="8XSX">
    <property type="method" value="EM"/>
    <property type="resolution" value="2.40 A"/>
    <property type="chains" value="LZ=1-136"/>
</dbReference>
<dbReference type="PDB" id="8XSY">
    <property type="method" value="EM"/>
    <property type="resolution" value="3.00 A"/>
    <property type="chains" value="LZ=1-136"/>
</dbReference>
<dbReference type="PDB" id="8XSZ">
    <property type="method" value="EM"/>
    <property type="resolution" value="3.20 A"/>
    <property type="chains" value="LZ=1-136"/>
</dbReference>
<dbReference type="PDB" id="8Y0W">
    <property type="method" value="EM"/>
    <property type="resolution" value="3.40 A"/>
    <property type="chains" value="LZ=1-136"/>
</dbReference>
<dbReference type="PDB" id="8Y0X">
    <property type="method" value="EM"/>
    <property type="resolution" value="3.30 A"/>
    <property type="chains" value="LZ=1-136"/>
</dbReference>
<dbReference type="PDB" id="8YOO">
    <property type="method" value="EM"/>
    <property type="resolution" value="2.00 A"/>
    <property type="chains" value="LZ=1-136"/>
</dbReference>
<dbReference type="PDB" id="8YOP">
    <property type="method" value="EM"/>
    <property type="resolution" value="2.20 A"/>
    <property type="chains" value="LZ=1-136"/>
</dbReference>
<dbReference type="PDB" id="9C3H">
    <property type="method" value="EM"/>
    <property type="resolution" value="2.00 A"/>
    <property type="chains" value="LZ=1-136"/>
</dbReference>
<dbReference type="PDB" id="9G8M">
    <property type="method" value="EM"/>
    <property type="resolution" value="3.30 A"/>
    <property type="chains" value="LZ=1-136"/>
</dbReference>
<dbReference type="PDB" id="9GMO">
    <property type="method" value="EM"/>
    <property type="resolution" value="2.59 A"/>
    <property type="chains" value="T=1-136"/>
</dbReference>
<dbReference type="PDBsum" id="4UG0"/>
<dbReference type="PDBsum" id="4V6X"/>
<dbReference type="PDBsum" id="5AJ0"/>
<dbReference type="PDBsum" id="5LKS"/>
<dbReference type="PDBsum" id="5T2C"/>
<dbReference type="PDBsum" id="6IP5"/>
<dbReference type="PDBsum" id="6IP6"/>
<dbReference type="PDBsum" id="6IP8"/>
<dbReference type="PDBsum" id="6LQM"/>
<dbReference type="PDBsum" id="6LSR"/>
<dbReference type="PDBsum" id="6LSS"/>
<dbReference type="PDBsum" id="6LU8"/>
<dbReference type="PDBsum" id="6OLE"/>
<dbReference type="PDBsum" id="6OLF"/>
<dbReference type="PDBsum" id="6OLG"/>
<dbReference type="PDBsum" id="6OLI"/>
<dbReference type="PDBsum" id="6OLZ"/>
<dbReference type="PDBsum" id="6OM0"/>
<dbReference type="PDBsum" id="6OM7"/>
<dbReference type="PDBsum" id="6QZP"/>
<dbReference type="PDBsum" id="6W6L"/>
<dbReference type="PDBsum" id="6XA1"/>
<dbReference type="PDBsum" id="6Y0G"/>
<dbReference type="PDBsum" id="6Y2L"/>
<dbReference type="PDBsum" id="6Y57"/>
<dbReference type="PDBsum" id="6Y6X"/>
<dbReference type="PDBsum" id="6Z6L"/>
<dbReference type="PDBsum" id="6Z6M"/>
<dbReference type="PDBsum" id="6Z6N"/>
<dbReference type="PDBsum" id="6ZM7"/>
<dbReference type="PDBsum" id="6ZME"/>
<dbReference type="PDBsum" id="6ZMI"/>
<dbReference type="PDBsum" id="6ZMO"/>
<dbReference type="PDBsum" id="7BHP"/>
<dbReference type="PDBsum" id="7F5S"/>
<dbReference type="PDBsum" id="7OW7"/>
<dbReference type="PDBsum" id="8A3D"/>
<dbReference type="PDBsum" id="8FKY"/>
<dbReference type="PDBsum" id="8FKZ"/>
<dbReference type="PDBsum" id="8FL2"/>
<dbReference type="PDBsum" id="8FL3"/>
<dbReference type="PDBsum" id="8FL4"/>
<dbReference type="PDBsum" id="8FL6"/>
<dbReference type="PDBsum" id="8FL7"/>
<dbReference type="PDBsum" id="8FL9"/>
<dbReference type="PDBsum" id="8FLA"/>
<dbReference type="PDBsum" id="8FLB"/>
<dbReference type="PDBsum" id="8FLC"/>
<dbReference type="PDBsum" id="8FLD"/>
<dbReference type="PDBsum" id="8FLE"/>
<dbReference type="PDBsum" id="8FLF"/>
<dbReference type="PDBsum" id="8G5Y"/>
<dbReference type="PDBsum" id="8G5Z"/>
<dbReference type="PDBsum" id="8G60"/>
<dbReference type="PDBsum" id="8G61"/>
<dbReference type="PDBsum" id="8G6J"/>
<dbReference type="PDBsum" id="8GLP"/>
<dbReference type="PDBsum" id="8IDT"/>
<dbReference type="PDBsum" id="8IDY"/>
<dbReference type="PDBsum" id="8IE3"/>
<dbReference type="PDBsum" id="8IFD"/>
<dbReference type="PDBsum" id="8IFE"/>
<dbReference type="PDBsum" id="8INE"/>
<dbReference type="PDBsum" id="8INF"/>
<dbReference type="PDBsum" id="8INK"/>
<dbReference type="PDBsum" id="8IPD"/>
<dbReference type="PDBsum" id="8IPX"/>
<dbReference type="PDBsum" id="8IPY"/>
<dbReference type="PDBsum" id="8IR1"/>
<dbReference type="PDBsum" id="8IR3"/>
<dbReference type="PDBsum" id="8JDJ"/>
<dbReference type="PDBsum" id="8JDK"/>
<dbReference type="PDBsum" id="8JDL"/>
<dbReference type="PDBsum" id="8JDM"/>
<dbReference type="PDBsum" id="8K2C"/>
<dbReference type="PDBsum" id="8OHD"/>
<dbReference type="PDBsum" id="8OJ0"/>
<dbReference type="PDBsum" id="8OJ5"/>
<dbReference type="PDBsum" id="8OJ8"/>
<dbReference type="PDBsum" id="8QFD"/>
<dbReference type="PDBsum" id="8QOI"/>
<dbReference type="PDBsum" id="8QYX"/>
<dbReference type="PDBsum" id="8RL2"/>
<dbReference type="PDBsum" id="8UKB"/>
<dbReference type="PDBsum" id="8XSX"/>
<dbReference type="PDBsum" id="8XSY"/>
<dbReference type="PDBsum" id="8XSZ"/>
<dbReference type="PDBsum" id="8Y0W"/>
<dbReference type="PDBsum" id="8Y0X"/>
<dbReference type="PDBsum" id="8YOO"/>
<dbReference type="PDBsum" id="8YOP"/>
<dbReference type="PDBsum" id="9C3H"/>
<dbReference type="PDBsum" id="9G8M"/>
<dbReference type="PDBsum" id="9GMO"/>
<dbReference type="EMDB" id="EMD-0948"/>
<dbReference type="EMDB" id="EMD-0963"/>
<dbReference type="EMDB" id="EMD-0964"/>
<dbReference type="EMDB" id="EMD-0978"/>
<dbReference type="EMDB" id="EMD-10668"/>
<dbReference type="EMDB" id="EMD-10674"/>
<dbReference type="EMDB" id="EMD-10690"/>
<dbReference type="EMDB" id="EMD-10709"/>
<dbReference type="EMDB" id="EMD-11098"/>
<dbReference type="EMDB" id="EMD-11099"/>
<dbReference type="EMDB" id="EMD-11100"/>
<dbReference type="EMDB" id="EMD-11288"/>
<dbReference type="EMDB" id="EMD-11289"/>
<dbReference type="EMDB" id="EMD-11292"/>
<dbReference type="EMDB" id="EMD-11299"/>
<dbReference type="EMDB" id="EMD-12189"/>
<dbReference type="EMDB" id="EMD-13094"/>
<dbReference type="EMDB" id="EMD-15113"/>
<dbReference type="EMDB" id="EMD-16880"/>
<dbReference type="EMDB" id="EMD-16902"/>
<dbReference type="EMDB" id="EMD-16905"/>
<dbReference type="EMDB" id="EMD-16908"/>
<dbReference type="EMDB" id="EMD-18382"/>
<dbReference type="EMDB" id="EMD-18539"/>
<dbReference type="EMDB" id="EMD-18765"/>
<dbReference type="EMDB" id="EMD-19330"/>
<dbReference type="EMDB" id="EMD-29261"/>
<dbReference type="EMDB" id="EMD-29262"/>
<dbReference type="EMDB" id="EMD-29265"/>
<dbReference type="EMDB" id="EMD-29266"/>
<dbReference type="EMDB" id="EMD-29267"/>
<dbReference type="EMDB" id="EMD-29268"/>
<dbReference type="EMDB" id="EMD-29269"/>
<dbReference type="EMDB" id="EMD-29271"/>
<dbReference type="EMDB" id="EMD-29272"/>
<dbReference type="EMDB" id="EMD-29273"/>
<dbReference type="EMDB" id="EMD-29274"/>
<dbReference type="EMDB" id="EMD-29275"/>
<dbReference type="EMDB" id="EMD-29276"/>
<dbReference type="EMDB" id="EMD-29277"/>
<dbReference type="EMDB" id="EMD-29757"/>
<dbReference type="EMDB" id="EMD-29758"/>
<dbReference type="EMDB" id="EMD-29759"/>
<dbReference type="EMDB" id="EMD-29760"/>
<dbReference type="EMDB" id="EMD-29771"/>
<dbReference type="EMDB" id="EMD-31465"/>
<dbReference type="EMDB" id="EMD-35370"/>
<dbReference type="EMDB" id="EMD-35371"/>
<dbReference type="EMDB" id="EMD-35375"/>
<dbReference type="EMDB" id="EMD-35413"/>
<dbReference type="EMDB" id="EMD-35414"/>
<dbReference type="EMDB" id="EMD-35596"/>
<dbReference type="EMDB" id="EMD-35597"/>
<dbReference type="EMDB" id="EMD-35599"/>
<dbReference type="EMDB" id="EMD-35639"/>
<dbReference type="EMDB" id="EMD-35649"/>
<dbReference type="EMDB" id="EMD-35651"/>
<dbReference type="EMDB" id="EMD-35672"/>
<dbReference type="EMDB" id="EMD-35673"/>
<dbReference type="EMDB" id="EMD-36178"/>
<dbReference type="EMDB" id="EMD-36179"/>
<dbReference type="EMDB" id="EMD-36180"/>
<dbReference type="EMDB" id="EMD-36181"/>
<dbReference type="EMDB" id="EMD-36838"/>
<dbReference type="EMDB" id="EMD-38629"/>
<dbReference type="EMDB" id="EMD-38630"/>
<dbReference type="EMDB" id="EMD-38631"/>
<dbReference type="EMDB" id="EMD-3883"/>
<dbReference type="EMDB" id="EMD-39455"/>
<dbReference type="EMDB" id="EMD-39456"/>
<dbReference type="EMDB" id="EMD-40205"/>
<dbReference type="EMDB" id="EMD-4070"/>
<dbReference type="EMDB" id="EMD-42351"/>
<dbReference type="EMDB" id="EMD-45170"/>
<dbReference type="EMDB" id="EMD-51132"/>
<dbReference type="EMDB" id="EMD-51452"/>
<dbReference type="EMDB" id="EMD-9701"/>
<dbReference type="EMDB" id="EMD-9702"/>
<dbReference type="EMDB" id="EMD-9703"/>
<dbReference type="SMR" id="P61353"/>
<dbReference type="BioGRID" id="112074">
    <property type="interactions" value="455"/>
</dbReference>
<dbReference type="ComplexPortal" id="CPX-5183">
    <property type="entry name" value="60S cytosolic large ribosomal subunit"/>
</dbReference>
<dbReference type="ComplexPortal" id="CPX-7664">
    <property type="entry name" value="60S cytosolic large ribosomal subunit, testis-specific variant"/>
</dbReference>
<dbReference type="ComplexPortal" id="CPX-7665">
    <property type="entry name" value="60S cytosolic large ribosomal subunit, striated muscle variant"/>
</dbReference>
<dbReference type="CORUM" id="P61353"/>
<dbReference type="FunCoup" id="P61353">
    <property type="interactions" value="2009"/>
</dbReference>
<dbReference type="IntAct" id="P61353">
    <property type="interactions" value="163"/>
</dbReference>
<dbReference type="MINT" id="P61353"/>
<dbReference type="STRING" id="9606.ENSP00000464813"/>
<dbReference type="GlyGen" id="P61353">
    <property type="glycosylation" value="1 site, 1 O-linked glycan (1 site)"/>
</dbReference>
<dbReference type="iPTMnet" id="P61353"/>
<dbReference type="MetOSite" id="P61353"/>
<dbReference type="PhosphoSitePlus" id="P61353"/>
<dbReference type="SwissPalm" id="P61353"/>
<dbReference type="BioMuta" id="RPL27"/>
<dbReference type="DMDM" id="47117772"/>
<dbReference type="jPOST" id="P61353"/>
<dbReference type="MassIVE" id="P61353"/>
<dbReference type="PaxDb" id="9606-ENSP00000464813"/>
<dbReference type="PeptideAtlas" id="P61353"/>
<dbReference type="ProteomicsDB" id="57297"/>
<dbReference type="Pumba" id="P61353"/>
<dbReference type="TopDownProteomics" id="P61353"/>
<dbReference type="Antibodypedia" id="1240">
    <property type="antibodies" value="213 antibodies from 26 providers"/>
</dbReference>
<dbReference type="DNASU" id="6155"/>
<dbReference type="Ensembl" id="ENST00000253788.12">
    <property type="protein sequence ID" value="ENSP00000253788.5"/>
    <property type="gene ID" value="ENSG00000131469.15"/>
</dbReference>
<dbReference type="Ensembl" id="ENST00000589037.5">
    <property type="protein sequence ID" value="ENSP00000467587.1"/>
    <property type="gene ID" value="ENSG00000131469.15"/>
</dbReference>
<dbReference type="Ensembl" id="ENST00000589913.6">
    <property type="protein sequence ID" value="ENSP00000464813.1"/>
    <property type="gene ID" value="ENSG00000131469.15"/>
</dbReference>
<dbReference type="GeneID" id="6155"/>
<dbReference type="KEGG" id="hsa:6155"/>
<dbReference type="MANE-Select" id="ENST00000253788.12">
    <property type="protein sequence ID" value="ENSP00000253788.5"/>
    <property type="RefSeq nucleotide sequence ID" value="NM_000988.5"/>
    <property type="RefSeq protein sequence ID" value="NP_000979.1"/>
</dbReference>
<dbReference type="UCSC" id="uc002icj.4">
    <property type="organism name" value="human"/>
</dbReference>
<dbReference type="AGR" id="HGNC:10328"/>
<dbReference type="CTD" id="6155"/>
<dbReference type="DisGeNET" id="6155"/>
<dbReference type="GeneCards" id="RPL27"/>
<dbReference type="GeneReviews" id="RPL27"/>
<dbReference type="HGNC" id="HGNC:10328">
    <property type="gene designation" value="RPL27"/>
</dbReference>
<dbReference type="HPA" id="ENSG00000131469">
    <property type="expression patterns" value="Low tissue specificity"/>
</dbReference>
<dbReference type="MalaCards" id="RPL27"/>
<dbReference type="MIM" id="607526">
    <property type="type" value="gene"/>
</dbReference>
<dbReference type="MIM" id="617408">
    <property type="type" value="phenotype"/>
</dbReference>
<dbReference type="neXtProt" id="NX_P61353"/>
<dbReference type="OpenTargets" id="ENSG00000131469"/>
<dbReference type="Orphanet" id="124">
    <property type="disease" value="Diamond-Blackfan anemia"/>
</dbReference>
<dbReference type="PharmGKB" id="PA34707"/>
<dbReference type="VEuPathDB" id="HostDB:ENSG00000131469"/>
<dbReference type="eggNOG" id="KOG3418">
    <property type="taxonomic scope" value="Eukaryota"/>
</dbReference>
<dbReference type="GeneTree" id="ENSGT00390000010721"/>
<dbReference type="HOGENOM" id="CLU_067359_0_1_1"/>
<dbReference type="InParanoid" id="P61353"/>
<dbReference type="OMA" id="NQWFFTK"/>
<dbReference type="OrthoDB" id="2365484at2759"/>
<dbReference type="PAN-GO" id="P61353">
    <property type="GO annotations" value="2 GO annotations based on evolutionary models"/>
</dbReference>
<dbReference type="PhylomeDB" id="P61353"/>
<dbReference type="PathwayCommons" id="P61353"/>
<dbReference type="Reactome" id="R-HSA-156827">
    <property type="pathway name" value="L13a-mediated translational silencing of Ceruloplasmin expression"/>
</dbReference>
<dbReference type="Reactome" id="R-HSA-156902">
    <property type="pathway name" value="Peptide chain elongation"/>
</dbReference>
<dbReference type="Reactome" id="R-HSA-1799339">
    <property type="pathway name" value="SRP-dependent cotranslational protein targeting to membrane"/>
</dbReference>
<dbReference type="Reactome" id="R-HSA-192823">
    <property type="pathway name" value="Viral mRNA Translation"/>
</dbReference>
<dbReference type="Reactome" id="R-HSA-2408557">
    <property type="pathway name" value="Selenocysteine synthesis"/>
</dbReference>
<dbReference type="Reactome" id="R-HSA-6791226">
    <property type="pathway name" value="Major pathway of rRNA processing in the nucleolus and cytosol"/>
</dbReference>
<dbReference type="Reactome" id="R-HSA-72689">
    <property type="pathway name" value="Formation of a pool of free 40S subunits"/>
</dbReference>
<dbReference type="Reactome" id="R-HSA-72706">
    <property type="pathway name" value="GTP hydrolysis and joining of the 60S ribosomal subunit"/>
</dbReference>
<dbReference type="Reactome" id="R-HSA-72764">
    <property type="pathway name" value="Eukaryotic Translation Termination"/>
</dbReference>
<dbReference type="Reactome" id="R-HSA-9010553">
    <property type="pathway name" value="Regulation of expression of SLITs and ROBOs"/>
</dbReference>
<dbReference type="Reactome" id="R-HSA-9633012">
    <property type="pathway name" value="Response of EIF2AK4 (GCN2) to amino acid deficiency"/>
</dbReference>
<dbReference type="Reactome" id="R-HSA-975956">
    <property type="pathway name" value="Nonsense Mediated Decay (NMD) independent of the Exon Junction Complex (EJC)"/>
</dbReference>
<dbReference type="Reactome" id="R-HSA-975957">
    <property type="pathway name" value="Nonsense Mediated Decay (NMD) enhanced by the Exon Junction Complex (EJC)"/>
</dbReference>
<dbReference type="SignaLink" id="P61353"/>
<dbReference type="SIGNOR" id="P61353"/>
<dbReference type="BioGRID-ORCS" id="6155">
    <property type="hits" value="820 hits in 1120 CRISPR screens"/>
</dbReference>
<dbReference type="CD-CODE" id="232F8A39">
    <property type="entry name" value="P-body"/>
</dbReference>
<dbReference type="CD-CODE" id="91857CE7">
    <property type="entry name" value="Nucleolus"/>
</dbReference>
<dbReference type="ChiTaRS" id="RPL27">
    <property type="organism name" value="human"/>
</dbReference>
<dbReference type="GeneWiki" id="RPL27"/>
<dbReference type="GenomeRNAi" id="6155"/>
<dbReference type="Pharos" id="P61353">
    <property type="development level" value="Tbio"/>
</dbReference>
<dbReference type="PRO" id="PR:P61353"/>
<dbReference type="Proteomes" id="UP000005640">
    <property type="component" value="Chromosome 17"/>
</dbReference>
<dbReference type="RNAct" id="P61353">
    <property type="molecule type" value="protein"/>
</dbReference>
<dbReference type="Bgee" id="ENSG00000131469">
    <property type="expression patterns" value="Expressed in cervix squamous epithelium and 211 other cell types or tissues"/>
</dbReference>
<dbReference type="ExpressionAtlas" id="P61353">
    <property type="expression patterns" value="baseline and differential"/>
</dbReference>
<dbReference type="GO" id="GO:0005737">
    <property type="term" value="C:cytoplasm"/>
    <property type="evidence" value="ECO:0000303"/>
    <property type="project" value="ComplexPortal"/>
</dbReference>
<dbReference type="GO" id="GO:0098556">
    <property type="term" value="C:cytoplasmic side of rough endoplasmic reticulum membrane"/>
    <property type="evidence" value="ECO:0000250"/>
    <property type="project" value="UniProtKB"/>
</dbReference>
<dbReference type="GO" id="GO:0005829">
    <property type="term" value="C:cytosol"/>
    <property type="evidence" value="ECO:0000304"/>
    <property type="project" value="Reactome"/>
</dbReference>
<dbReference type="GO" id="GO:0022625">
    <property type="term" value="C:cytosolic large ribosomal subunit"/>
    <property type="evidence" value="ECO:0000314"/>
    <property type="project" value="UniProtKB"/>
</dbReference>
<dbReference type="GO" id="GO:0022626">
    <property type="term" value="C:cytosolic ribosome"/>
    <property type="evidence" value="ECO:0000314"/>
    <property type="project" value="FlyBase"/>
</dbReference>
<dbReference type="GO" id="GO:0070062">
    <property type="term" value="C:extracellular exosome"/>
    <property type="evidence" value="ECO:0007005"/>
    <property type="project" value="UniProtKB"/>
</dbReference>
<dbReference type="GO" id="GO:0005925">
    <property type="term" value="C:focal adhesion"/>
    <property type="evidence" value="ECO:0007005"/>
    <property type="project" value="UniProtKB"/>
</dbReference>
<dbReference type="GO" id="GO:0016020">
    <property type="term" value="C:membrane"/>
    <property type="evidence" value="ECO:0007005"/>
    <property type="project" value="UniProtKB"/>
</dbReference>
<dbReference type="GO" id="GO:0005730">
    <property type="term" value="C:nucleolus"/>
    <property type="evidence" value="ECO:0000314"/>
    <property type="project" value="HPA"/>
</dbReference>
<dbReference type="GO" id="GO:0005654">
    <property type="term" value="C:nucleoplasm"/>
    <property type="evidence" value="ECO:0000314"/>
    <property type="project" value="HPA"/>
</dbReference>
<dbReference type="GO" id="GO:0005634">
    <property type="term" value="C:nucleus"/>
    <property type="evidence" value="ECO:0007005"/>
    <property type="project" value="UniProtKB"/>
</dbReference>
<dbReference type="GO" id="GO:1990904">
    <property type="term" value="C:ribonucleoprotein complex"/>
    <property type="evidence" value="ECO:0000314"/>
    <property type="project" value="MGI"/>
</dbReference>
<dbReference type="GO" id="GO:0005840">
    <property type="term" value="C:ribosome"/>
    <property type="evidence" value="ECO:0000304"/>
    <property type="project" value="UniProtKB"/>
</dbReference>
<dbReference type="GO" id="GO:0045202">
    <property type="term" value="C:synapse"/>
    <property type="evidence" value="ECO:0007669"/>
    <property type="project" value="Ensembl"/>
</dbReference>
<dbReference type="GO" id="GO:0003723">
    <property type="term" value="F:RNA binding"/>
    <property type="evidence" value="ECO:0007005"/>
    <property type="project" value="UniProtKB"/>
</dbReference>
<dbReference type="GO" id="GO:0003735">
    <property type="term" value="F:structural constituent of ribosome"/>
    <property type="evidence" value="ECO:0000314"/>
    <property type="project" value="UniProtKB"/>
</dbReference>
<dbReference type="GO" id="GO:0002181">
    <property type="term" value="P:cytoplasmic translation"/>
    <property type="evidence" value="ECO:0000303"/>
    <property type="project" value="ComplexPortal"/>
</dbReference>
<dbReference type="GO" id="GO:0006364">
    <property type="term" value="P:rRNA processing"/>
    <property type="evidence" value="ECO:0000315"/>
    <property type="project" value="UniProtKB"/>
</dbReference>
<dbReference type="GO" id="GO:0006412">
    <property type="term" value="P:translation"/>
    <property type="evidence" value="ECO:0000303"/>
    <property type="project" value="UniProtKB"/>
</dbReference>
<dbReference type="CDD" id="cd06090">
    <property type="entry name" value="KOW_RPL27"/>
    <property type="match status" value="1"/>
</dbReference>
<dbReference type="FunFam" id="2.30.30.770:FF:000001">
    <property type="entry name" value="60S ribosomal protein L27"/>
    <property type="match status" value="1"/>
</dbReference>
<dbReference type="Gene3D" id="2.30.30.770">
    <property type="match status" value="1"/>
</dbReference>
<dbReference type="InterPro" id="IPR005824">
    <property type="entry name" value="KOW"/>
</dbReference>
<dbReference type="InterPro" id="IPR001141">
    <property type="entry name" value="Ribosomal_eL27"/>
</dbReference>
<dbReference type="InterPro" id="IPR018262">
    <property type="entry name" value="Ribosomal_eL27_CS"/>
</dbReference>
<dbReference type="InterPro" id="IPR041991">
    <property type="entry name" value="Ribosomal_eL27_KOW"/>
</dbReference>
<dbReference type="InterPro" id="IPR038655">
    <property type="entry name" value="Ribosomal_eL27_sf"/>
</dbReference>
<dbReference type="InterPro" id="IPR008991">
    <property type="entry name" value="Translation_prot_SH3-like_sf"/>
</dbReference>
<dbReference type="PANTHER" id="PTHR10497">
    <property type="entry name" value="60S RIBOSOMAL PROTEIN L27"/>
    <property type="match status" value="1"/>
</dbReference>
<dbReference type="Pfam" id="PF00467">
    <property type="entry name" value="KOW"/>
    <property type="match status" value="1"/>
</dbReference>
<dbReference type="Pfam" id="PF01777">
    <property type="entry name" value="Ribosomal_L27e"/>
    <property type="match status" value="1"/>
</dbReference>
<dbReference type="SMART" id="SM00739">
    <property type="entry name" value="KOW"/>
    <property type="match status" value="1"/>
</dbReference>
<dbReference type="SUPFAM" id="SSF50104">
    <property type="entry name" value="Translation proteins SH3-like domain"/>
    <property type="match status" value="1"/>
</dbReference>
<dbReference type="PROSITE" id="PS01107">
    <property type="entry name" value="RIBOSOMAL_L27E"/>
    <property type="match status" value="1"/>
</dbReference>
<sequence>MGKFMKPGKVVLVLAGRYSGRKAVIVKNIDDGTSDRPYSHALVAGIDRYPRKVTAAMGKKKIAKRSKIKSFVKVYNYNHLMPTRYSVDIPLDKTVVNKDVFRDPALKRKARREAKVKFEERYKTGKNKWFFQKLRF</sequence>
<protein>
    <recommendedName>
        <fullName evidence="9">Large ribosomal subunit protein eL27</fullName>
    </recommendedName>
    <alternativeName>
        <fullName>60S ribosomal protein L27</fullName>
    </alternativeName>
</protein>
<feature type="chain" id="PRO_0000126077" description="Large ribosomal subunit protein eL27">
    <location>
        <begin position="1"/>
        <end position="136"/>
    </location>
</feature>
<feature type="domain" description="KOW">
    <location>
        <begin position="5"/>
        <end position="40"/>
    </location>
</feature>
<feature type="modified residue" description="N6-acetyllysine" evidence="20">
    <location>
        <position position="27"/>
    </location>
</feature>
<feature type="modified residue" description="N6-acetyllysine" evidence="20">
    <location>
        <position position="93"/>
    </location>
</feature>